<organism>
    <name type="scientific">Shewanella woodyi (strain ATCC 51908 / MS32)</name>
    <dbReference type="NCBI Taxonomy" id="392500"/>
    <lineage>
        <taxon>Bacteria</taxon>
        <taxon>Pseudomonadati</taxon>
        <taxon>Pseudomonadota</taxon>
        <taxon>Gammaproteobacteria</taxon>
        <taxon>Alteromonadales</taxon>
        <taxon>Shewanellaceae</taxon>
        <taxon>Shewanella</taxon>
    </lineage>
</organism>
<keyword id="KW-0997">Cell inner membrane</keyword>
<keyword id="KW-1003">Cell membrane</keyword>
<keyword id="KW-0472">Membrane</keyword>
<keyword id="KW-0653">Protein transport</keyword>
<keyword id="KW-1185">Reference proteome</keyword>
<keyword id="KW-0811">Translocation</keyword>
<keyword id="KW-0812">Transmembrane</keyword>
<keyword id="KW-1133">Transmembrane helix</keyword>
<keyword id="KW-0813">Transport</keyword>
<dbReference type="EMBL" id="CP000961">
    <property type="protein sequence ID" value="ACA84820.1"/>
    <property type="molecule type" value="Genomic_DNA"/>
</dbReference>
<dbReference type="RefSeq" id="WP_012323168.1">
    <property type="nucleotide sequence ID" value="NC_010506.1"/>
</dbReference>
<dbReference type="SMR" id="B1KR03"/>
<dbReference type="STRING" id="392500.Swoo_0523"/>
<dbReference type="KEGG" id="swd:Swoo_0523"/>
<dbReference type="eggNOG" id="COG1826">
    <property type="taxonomic scope" value="Bacteria"/>
</dbReference>
<dbReference type="HOGENOM" id="CLU_086034_1_0_6"/>
<dbReference type="Proteomes" id="UP000002168">
    <property type="component" value="Chromosome"/>
</dbReference>
<dbReference type="GO" id="GO:0033281">
    <property type="term" value="C:TAT protein transport complex"/>
    <property type="evidence" value="ECO:0007669"/>
    <property type="project" value="UniProtKB-UniRule"/>
</dbReference>
<dbReference type="GO" id="GO:0008320">
    <property type="term" value="F:protein transmembrane transporter activity"/>
    <property type="evidence" value="ECO:0007669"/>
    <property type="project" value="UniProtKB-UniRule"/>
</dbReference>
<dbReference type="GO" id="GO:0043953">
    <property type="term" value="P:protein transport by the Tat complex"/>
    <property type="evidence" value="ECO:0007669"/>
    <property type="project" value="UniProtKB-UniRule"/>
</dbReference>
<dbReference type="Gene3D" id="1.20.5.3310">
    <property type="match status" value="1"/>
</dbReference>
<dbReference type="HAMAP" id="MF_00237">
    <property type="entry name" value="TatB"/>
    <property type="match status" value="1"/>
</dbReference>
<dbReference type="InterPro" id="IPR003369">
    <property type="entry name" value="TatA/B/E"/>
</dbReference>
<dbReference type="InterPro" id="IPR018448">
    <property type="entry name" value="TatB"/>
</dbReference>
<dbReference type="NCBIfam" id="TIGR01410">
    <property type="entry name" value="tatB"/>
    <property type="match status" value="1"/>
</dbReference>
<dbReference type="PANTHER" id="PTHR33162">
    <property type="entry name" value="SEC-INDEPENDENT PROTEIN TRANSLOCASE PROTEIN TATA, CHLOROPLASTIC"/>
    <property type="match status" value="1"/>
</dbReference>
<dbReference type="PANTHER" id="PTHR33162:SF1">
    <property type="entry name" value="SEC-INDEPENDENT PROTEIN TRANSLOCASE PROTEIN TATA, CHLOROPLASTIC"/>
    <property type="match status" value="1"/>
</dbReference>
<dbReference type="Pfam" id="PF02416">
    <property type="entry name" value="TatA_B_E"/>
    <property type="match status" value="1"/>
</dbReference>
<dbReference type="PRINTS" id="PR01506">
    <property type="entry name" value="TATBPROTEIN"/>
</dbReference>
<comment type="function">
    <text evidence="1">Part of the twin-arginine translocation (Tat) system that transports large folded proteins containing a characteristic twin-arginine motif in their signal peptide across membranes. Together with TatC, TatB is part of a receptor directly interacting with Tat signal peptides. TatB may form an oligomeric binding site that transiently accommodates folded Tat precursor proteins before their translocation.</text>
</comment>
<comment type="subunit">
    <text evidence="1">The Tat system comprises two distinct complexes: a TatABC complex, containing multiple copies of TatA, TatB and TatC subunits, and a separate TatA complex, containing only TatA subunits. Substrates initially bind to the TatABC complex, which probably triggers association of the separate TatA complex to form the active translocon.</text>
</comment>
<comment type="subcellular location">
    <subcellularLocation>
        <location evidence="1">Cell inner membrane</location>
        <topology evidence="1">Single-pass membrane protein</topology>
    </subcellularLocation>
</comment>
<comment type="similarity">
    <text evidence="1">Belongs to the TatB family.</text>
</comment>
<sequence>MFDGIGFMELLLIGILGLVVLGPERLPVAVRSITGWIRAMKRMANSVKDELEQELKIEQLHSDLKKAENQGLKDLSPELQDSIDQLKEAAQSVNRPYKIEETPSASSSAPSESTPSEAPTAEVSANPDKSNR</sequence>
<gene>
    <name evidence="1" type="primary">tatB</name>
    <name type="ordered locus">Swoo_0523</name>
</gene>
<name>TATB_SHEWM</name>
<feature type="chain" id="PRO_1000100637" description="Sec-independent protein translocase protein TatB">
    <location>
        <begin position="1"/>
        <end position="132"/>
    </location>
</feature>
<feature type="transmembrane region" description="Helical" evidence="1">
    <location>
        <begin position="2"/>
        <end position="22"/>
    </location>
</feature>
<feature type="region of interest" description="Disordered" evidence="2">
    <location>
        <begin position="68"/>
        <end position="132"/>
    </location>
</feature>
<feature type="compositionally biased region" description="Low complexity" evidence="2">
    <location>
        <begin position="102"/>
        <end position="122"/>
    </location>
</feature>
<evidence type="ECO:0000255" key="1">
    <source>
        <dbReference type="HAMAP-Rule" id="MF_00237"/>
    </source>
</evidence>
<evidence type="ECO:0000256" key="2">
    <source>
        <dbReference type="SAM" id="MobiDB-lite"/>
    </source>
</evidence>
<accession>B1KR03</accession>
<protein>
    <recommendedName>
        <fullName evidence="1">Sec-independent protein translocase protein TatB</fullName>
    </recommendedName>
</protein>
<proteinExistence type="inferred from homology"/>
<reference key="1">
    <citation type="submission" date="2008-02" db="EMBL/GenBank/DDBJ databases">
        <title>Complete sequence of Shewanella woodyi ATCC 51908.</title>
        <authorList>
            <consortium name="US DOE Joint Genome Institute"/>
            <person name="Copeland A."/>
            <person name="Lucas S."/>
            <person name="Lapidus A."/>
            <person name="Glavina del Rio T."/>
            <person name="Dalin E."/>
            <person name="Tice H."/>
            <person name="Bruce D."/>
            <person name="Goodwin L."/>
            <person name="Pitluck S."/>
            <person name="Sims D."/>
            <person name="Brettin T."/>
            <person name="Detter J.C."/>
            <person name="Han C."/>
            <person name="Kuske C.R."/>
            <person name="Schmutz J."/>
            <person name="Larimer F."/>
            <person name="Land M."/>
            <person name="Hauser L."/>
            <person name="Kyrpides N."/>
            <person name="Lykidis A."/>
            <person name="Zhao J.-S."/>
            <person name="Richardson P."/>
        </authorList>
    </citation>
    <scope>NUCLEOTIDE SEQUENCE [LARGE SCALE GENOMIC DNA]</scope>
    <source>
        <strain>ATCC 51908 / MS32</strain>
    </source>
</reference>